<comment type="function">
    <text evidence="1">Catalyzes the decarboxylation of four acetate groups of uroporphyrinogen-III to yield coproporphyrinogen-III.</text>
</comment>
<comment type="catalytic activity">
    <reaction evidence="1">
        <text>uroporphyrinogen III + 4 H(+) = coproporphyrinogen III + 4 CO2</text>
        <dbReference type="Rhea" id="RHEA:19865"/>
        <dbReference type="ChEBI" id="CHEBI:15378"/>
        <dbReference type="ChEBI" id="CHEBI:16526"/>
        <dbReference type="ChEBI" id="CHEBI:57308"/>
        <dbReference type="ChEBI" id="CHEBI:57309"/>
        <dbReference type="EC" id="4.1.1.37"/>
    </reaction>
</comment>
<comment type="pathway">
    <text evidence="1">Porphyrin-containing compound metabolism; protoporphyrin-IX biosynthesis; coproporphyrinogen-III from 5-aminolevulinate: step 4/4.</text>
</comment>
<comment type="subunit">
    <text evidence="1">Homodimer.</text>
</comment>
<comment type="subcellular location">
    <subcellularLocation>
        <location evidence="1">Cytoplasm</location>
    </subcellularLocation>
</comment>
<comment type="similarity">
    <text evidence="1">Belongs to the uroporphyrinogen decarboxylase family.</text>
</comment>
<keyword id="KW-0963">Cytoplasm</keyword>
<keyword id="KW-0210">Decarboxylase</keyword>
<keyword id="KW-0456">Lyase</keyword>
<keyword id="KW-0627">Porphyrin biosynthesis</keyword>
<evidence type="ECO:0000255" key="1">
    <source>
        <dbReference type="HAMAP-Rule" id="MF_00218"/>
    </source>
</evidence>
<dbReference type="EC" id="4.1.1.37" evidence="1"/>
<dbReference type="EMBL" id="CP001120">
    <property type="protein sequence ID" value="ACF69503.1"/>
    <property type="molecule type" value="Genomic_DNA"/>
</dbReference>
<dbReference type="RefSeq" id="WP_000137625.1">
    <property type="nucleotide sequence ID" value="NC_011083.1"/>
</dbReference>
<dbReference type="SMR" id="B4TCT6"/>
<dbReference type="KEGG" id="seh:SeHA_C4498"/>
<dbReference type="HOGENOM" id="CLU_040933_0_0_6"/>
<dbReference type="UniPathway" id="UPA00251">
    <property type="reaction ID" value="UER00321"/>
</dbReference>
<dbReference type="Proteomes" id="UP000001866">
    <property type="component" value="Chromosome"/>
</dbReference>
<dbReference type="GO" id="GO:0005829">
    <property type="term" value="C:cytosol"/>
    <property type="evidence" value="ECO:0007669"/>
    <property type="project" value="TreeGrafter"/>
</dbReference>
<dbReference type="GO" id="GO:0004853">
    <property type="term" value="F:uroporphyrinogen decarboxylase activity"/>
    <property type="evidence" value="ECO:0007669"/>
    <property type="project" value="UniProtKB-UniRule"/>
</dbReference>
<dbReference type="GO" id="GO:0019353">
    <property type="term" value="P:protoporphyrinogen IX biosynthetic process from glutamate"/>
    <property type="evidence" value="ECO:0007669"/>
    <property type="project" value="TreeGrafter"/>
</dbReference>
<dbReference type="CDD" id="cd00717">
    <property type="entry name" value="URO-D"/>
    <property type="match status" value="1"/>
</dbReference>
<dbReference type="FunFam" id="3.20.20.210:FF:000001">
    <property type="entry name" value="Uroporphyrinogen decarboxylase"/>
    <property type="match status" value="1"/>
</dbReference>
<dbReference type="Gene3D" id="3.20.20.210">
    <property type="match status" value="1"/>
</dbReference>
<dbReference type="HAMAP" id="MF_00218">
    <property type="entry name" value="URO_D"/>
    <property type="match status" value="1"/>
</dbReference>
<dbReference type="InterPro" id="IPR038071">
    <property type="entry name" value="UROD/MetE-like_sf"/>
</dbReference>
<dbReference type="InterPro" id="IPR006361">
    <property type="entry name" value="Uroporphyrinogen_deCO2ase_HemE"/>
</dbReference>
<dbReference type="InterPro" id="IPR000257">
    <property type="entry name" value="Uroporphyrinogen_deCOase"/>
</dbReference>
<dbReference type="NCBIfam" id="TIGR01464">
    <property type="entry name" value="hemE"/>
    <property type="match status" value="1"/>
</dbReference>
<dbReference type="PANTHER" id="PTHR21091">
    <property type="entry name" value="METHYLTETRAHYDROFOLATE:HOMOCYSTEINE METHYLTRANSFERASE RELATED"/>
    <property type="match status" value="1"/>
</dbReference>
<dbReference type="PANTHER" id="PTHR21091:SF169">
    <property type="entry name" value="UROPORPHYRINOGEN DECARBOXYLASE"/>
    <property type="match status" value="1"/>
</dbReference>
<dbReference type="Pfam" id="PF01208">
    <property type="entry name" value="URO-D"/>
    <property type="match status" value="1"/>
</dbReference>
<dbReference type="SUPFAM" id="SSF51726">
    <property type="entry name" value="UROD/MetE-like"/>
    <property type="match status" value="1"/>
</dbReference>
<dbReference type="PROSITE" id="PS00906">
    <property type="entry name" value="UROD_1"/>
    <property type="match status" value="1"/>
</dbReference>
<dbReference type="PROSITE" id="PS00907">
    <property type="entry name" value="UROD_2"/>
    <property type="match status" value="1"/>
</dbReference>
<gene>
    <name evidence="1" type="primary">hemE</name>
    <name type="ordered locus">SeHA_C4498</name>
</gene>
<reference key="1">
    <citation type="journal article" date="2011" name="J. Bacteriol.">
        <title>Comparative genomics of 28 Salmonella enterica isolates: evidence for CRISPR-mediated adaptive sublineage evolution.</title>
        <authorList>
            <person name="Fricke W.F."/>
            <person name="Mammel M.K."/>
            <person name="McDermott P.F."/>
            <person name="Tartera C."/>
            <person name="White D.G."/>
            <person name="Leclerc J.E."/>
            <person name="Ravel J."/>
            <person name="Cebula T.A."/>
        </authorList>
    </citation>
    <scope>NUCLEOTIDE SEQUENCE [LARGE SCALE GENOMIC DNA]</scope>
    <source>
        <strain>SL476</strain>
    </source>
</reference>
<accession>B4TCT6</accession>
<proteinExistence type="inferred from homology"/>
<protein>
    <recommendedName>
        <fullName evidence="1">Uroporphyrinogen decarboxylase</fullName>
        <shortName evidence="1">UPD</shortName>
        <shortName evidence="1">URO-D</shortName>
        <ecNumber evidence="1">4.1.1.37</ecNumber>
    </recommendedName>
</protein>
<sequence length="354" mass="39162">MTELKNDRYLRALLRQPVDVTPVWMMRQAGRYLPEYKATRAQAGDFMSLCKNAELACEVTLQPLRRYPLDAAILFSDILTIPDAMGLGLYFEAGEGPRFTAPVTCKGDVDKLPIPDPEDELGYVMNAVRTIRRELKGEVPLIGFSGSPWTLATYMVEGGSSKAFTVIKKMMYADPQALHLLLDKLAKSVTLYLNAQIKAGAQSVMIFDTWGGVLTGRDYQQFSLYYMHKIVDGLLRENDGRRVPVTLFTKGGGQWLEAMAETGCDALGLDWTTDIADARRRVGHKVALQGNMDPSMLYAPPARIEDEVATILAGFGQGEGHVFNLGHGIHQDVPPEHAGAFVEAVHRLSAQYHN</sequence>
<organism>
    <name type="scientific">Salmonella heidelberg (strain SL476)</name>
    <dbReference type="NCBI Taxonomy" id="454169"/>
    <lineage>
        <taxon>Bacteria</taxon>
        <taxon>Pseudomonadati</taxon>
        <taxon>Pseudomonadota</taxon>
        <taxon>Gammaproteobacteria</taxon>
        <taxon>Enterobacterales</taxon>
        <taxon>Enterobacteriaceae</taxon>
        <taxon>Salmonella</taxon>
    </lineage>
</organism>
<name>DCUP_SALHS</name>
<feature type="chain" id="PRO_1000100015" description="Uroporphyrinogen decarboxylase">
    <location>
        <begin position="1"/>
        <end position="354"/>
    </location>
</feature>
<feature type="binding site" evidence="1">
    <location>
        <begin position="27"/>
        <end position="31"/>
    </location>
    <ligand>
        <name>substrate</name>
    </ligand>
</feature>
<feature type="binding site" evidence="1">
    <location>
        <position position="77"/>
    </location>
    <ligand>
        <name>substrate</name>
    </ligand>
</feature>
<feature type="binding site" evidence="1">
    <location>
        <position position="154"/>
    </location>
    <ligand>
        <name>substrate</name>
    </ligand>
</feature>
<feature type="binding site" evidence="1">
    <location>
        <position position="209"/>
    </location>
    <ligand>
        <name>substrate</name>
    </ligand>
</feature>
<feature type="binding site" evidence="1">
    <location>
        <position position="327"/>
    </location>
    <ligand>
        <name>substrate</name>
    </ligand>
</feature>
<feature type="site" description="Transition state stabilizer" evidence="1">
    <location>
        <position position="77"/>
    </location>
</feature>